<sequence>MNSYFTNPSLSCHLAGGQDVLPNVALNSTAYDPVRHFSTYGAAVAQNRIYSTPFYSPQENVVFSSSRGPYDYGSNSFYQEKDMLSNCRQNTLGHNTQTSIAQDFSSEQGRTAPQDQKASIQIYPWMQRMNSHSGVGYGADRRRGRQIYSRYQTLELEKEFHFNRYLTRRRRIEIANALCLTERQIKIWFQNRRMKWKKESNLTSTLSGGGGGATADSLGGKEEKREETEEEKQKE</sequence>
<proteinExistence type="evidence at protein level"/>
<name>HXC6_HUMAN</name>
<comment type="function">
    <text>Sequence-specific transcription factor which is part of a developmental regulatory system that provides cells with specific positional identities on the anterior-posterior axis.</text>
</comment>
<comment type="subcellular location">
    <subcellularLocation>
        <location>Nucleus</location>
    </subcellularLocation>
</comment>
<comment type="alternative products">
    <event type="alternative splicing"/>
    <isoform>
        <id>P09630-1</id>
        <name>1</name>
        <sequence type="displayed"/>
    </isoform>
    <isoform>
        <id>P09630-2</id>
        <name>2</name>
        <sequence type="described" ref="VSP_002392"/>
    </isoform>
</comment>
<comment type="similarity">
    <text evidence="5">Belongs to the Antp homeobox family.</text>
</comment>
<reference key="1">
    <citation type="journal article" date="1987" name="Proc. Natl. Acad. Sci. U.S.A.">
        <title>Two human homeobox genes, c1 and c8: structure analysis and expression in embryonic development.</title>
        <authorList>
            <person name="Simeone A."/>
            <person name="Mavilio F."/>
            <person name="Acampora D."/>
            <person name="Giampaolo A."/>
            <person name="Faiella A."/>
            <person name="Zappavigna V."/>
            <person name="D'Esposito M."/>
            <person name="Pannese M."/>
            <person name="Russo G."/>
            <person name="Boncinelli E."/>
            <person name="Peschle C."/>
        </authorList>
    </citation>
    <scope>NUCLEOTIDE SEQUENCE [MRNA] (ISOFORM 1)</scope>
</reference>
<reference key="2">
    <citation type="journal article" date="1988" name="Nucleic Acids Res.">
        <title>At least three human homeoboxes on chromosome 12 belong to the same transcription unit.</title>
        <authorList>
            <person name="Simeone A."/>
            <person name="Pannese M."/>
            <person name="Acampora D."/>
            <person name="D'Esposito M."/>
            <person name="Boncinelli E."/>
        </authorList>
    </citation>
    <scope>NUCLEOTIDE SEQUENCE [MRNA] (ISOFORM 1)</scope>
</reference>
<reference key="3">
    <citation type="journal article" date="1996" name="Biochem. J.">
        <title>Cloning and expression of a new HOXC6 transcript encoding a repressing protein.</title>
        <authorList>
            <person name="Chariot A."/>
            <person name="Castronovo V."/>
            <person name="Le P."/>
            <person name="Gillet C."/>
            <person name="Sobel M.E."/>
            <person name="Gielen J."/>
        </authorList>
    </citation>
    <scope>NUCLEOTIDE SEQUENCE [MRNA] (ISOFORM 2)</scope>
</reference>
<reference key="4">
    <citation type="journal article" date="2004" name="Nat. Genet.">
        <title>Complete sequencing and characterization of 21,243 full-length human cDNAs.</title>
        <authorList>
            <person name="Ota T."/>
            <person name="Suzuki Y."/>
            <person name="Nishikawa T."/>
            <person name="Otsuki T."/>
            <person name="Sugiyama T."/>
            <person name="Irie R."/>
            <person name="Wakamatsu A."/>
            <person name="Hayashi K."/>
            <person name="Sato H."/>
            <person name="Nagai K."/>
            <person name="Kimura K."/>
            <person name="Makita H."/>
            <person name="Sekine M."/>
            <person name="Obayashi M."/>
            <person name="Nishi T."/>
            <person name="Shibahara T."/>
            <person name="Tanaka T."/>
            <person name="Ishii S."/>
            <person name="Yamamoto J."/>
            <person name="Saito K."/>
            <person name="Kawai Y."/>
            <person name="Isono Y."/>
            <person name="Nakamura Y."/>
            <person name="Nagahari K."/>
            <person name="Murakami K."/>
            <person name="Yasuda T."/>
            <person name="Iwayanagi T."/>
            <person name="Wagatsuma M."/>
            <person name="Shiratori A."/>
            <person name="Sudo H."/>
            <person name="Hosoiri T."/>
            <person name="Kaku Y."/>
            <person name="Kodaira H."/>
            <person name="Kondo H."/>
            <person name="Sugawara M."/>
            <person name="Takahashi M."/>
            <person name="Kanda K."/>
            <person name="Yokoi T."/>
            <person name="Furuya T."/>
            <person name="Kikkawa E."/>
            <person name="Omura Y."/>
            <person name="Abe K."/>
            <person name="Kamihara K."/>
            <person name="Katsuta N."/>
            <person name="Sato K."/>
            <person name="Tanikawa M."/>
            <person name="Yamazaki M."/>
            <person name="Ninomiya K."/>
            <person name="Ishibashi T."/>
            <person name="Yamashita H."/>
            <person name="Murakawa K."/>
            <person name="Fujimori K."/>
            <person name="Tanai H."/>
            <person name="Kimata M."/>
            <person name="Watanabe M."/>
            <person name="Hiraoka S."/>
            <person name="Chiba Y."/>
            <person name="Ishida S."/>
            <person name="Ono Y."/>
            <person name="Takiguchi S."/>
            <person name="Watanabe S."/>
            <person name="Yosida M."/>
            <person name="Hotuta T."/>
            <person name="Kusano J."/>
            <person name="Kanehori K."/>
            <person name="Takahashi-Fujii A."/>
            <person name="Hara H."/>
            <person name="Tanase T.-O."/>
            <person name="Nomura Y."/>
            <person name="Togiya S."/>
            <person name="Komai F."/>
            <person name="Hara R."/>
            <person name="Takeuchi K."/>
            <person name="Arita M."/>
            <person name="Imose N."/>
            <person name="Musashino K."/>
            <person name="Yuuki H."/>
            <person name="Oshima A."/>
            <person name="Sasaki N."/>
            <person name="Aotsuka S."/>
            <person name="Yoshikawa Y."/>
            <person name="Matsunawa H."/>
            <person name="Ichihara T."/>
            <person name="Shiohata N."/>
            <person name="Sano S."/>
            <person name="Moriya S."/>
            <person name="Momiyama H."/>
            <person name="Satoh N."/>
            <person name="Takami S."/>
            <person name="Terashima Y."/>
            <person name="Suzuki O."/>
            <person name="Nakagawa S."/>
            <person name="Senoh A."/>
            <person name="Mizoguchi H."/>
            <person name="Goto Y."/>
            <person name="Shimizu F."/>
            <person name="Wakebe H."/>
            <person name="Hishigaki H."/>
            <person name="Watanabe T."/>
            <person name="Sugiyama A."/>
            <person name="Takemoto M."/>
            <person name="Kawakami B."/>
            <person name="Yamazaki M."/>
            <person name="Watanabe K."/>
            <person name="Kumagai A."/>
            <person name="Itakura S."/>
            <person name="Fukuzumi Y."/>
            <person name="Fujimori Y."/>
            <person name="Komiyama M."/>
            <person name="Tashiro H."/>
            <person name="Tanigami A."/>
            <person name="Fujiwara T."/>
            <person name="Ono T."/>
            <person name="Yamada K."/>
            <person name="Fujii Y."/>
            <person name="Ozaki K."/>
            <person name="Hirao M."/>
            <person name="Ohmori Y."/>
            <person name="Kawabata A."/>
            <person name="Hikiji T."/>
            <person name="Kobatake N."/>
            <person name="Inagaki H."/>
            <person name="Ikema Y."/>
            <person name="Okamoto S."/>
            <person name="Okitani R."/>
            <person name="Kawakami T."/>
            <person name="Noguchi S."/>
            <person name="Itoh T."/>
            <person name="Shigeta K."/>
            <person name="Senba T."/>
            <person name="Matsumura K."/>
            <person name="Nakajima Y."/>
            <person name="Mizuno T."/>
            <person name="Morinaga M."/>
            <person name="Sasaki M."/>
            <person name="Togashi T."/>
            <person name="Oyama M."/>
            <person name="Hata H."/>
            <person name="Watanabe M."/>
            <person name="Komatsu T."/>
            <person name="Mizushima-Sugano J."/>
            <person name="Satoh T."/>
            <person name="Shirai Y."/>
            <person name="Takahashi Y."/>
            <person name="Nakagawa K."/>
            <person name="Okumura K."/>
            <person name="Nagase T."/>
            <person name="Nomura N."/>
            <person name="Kikuchi H."/>
            <person name="Masuho Y."/>
            <person name="Yamashita R."/>
            <person name="Nakai K."/>
            <person name="Yada T."/>
            <person name="Nakamura Y."/>
            <person name="Ohara O."/>
            <person name="Isogai T."/>
            <person name="Sugano S."/>
        </authorList>
    </citation>
    <scope>NUCLEOTIDE SEQUENCE [LARGE SCALE MRNA] (ISOFORM 2)</scope>
    <source>
        <tissue>Synovium</tissue>
    </source>
</reference>
<reference key="5">
    <citation type="submission" date="2005-07" db="EMBL/GenBank/DDBJ databases">
        <authorList>
            <person name="Mural R.J."/>
            <person name="Istrail S."/>
            <person name="Sutton G.G."/>
            <person name="Florea L."/>
            <person name="Halpern A.L."/>
            <person name="Mobarry C.M."/>
            <person name="Lippert R."/>
            <person name="Walenz B."/>
            <person name="Shatkay H."/>
            <person name="Dew I."/>
            <person name="Miller J.R."/>
            <person name="Flanigan M.J."/>
            <person name="Edwards N.J."/>
            <person name="Bolanos R."/>
            <person name="Fasulo D."/>
            <person name="Halldorsson B.V."/>
            <person name="Hannenhalli S."/>
            <person name="Turner R."/>
            <person name="Yooseph S."/>
            <person name="Lu F."/>
            <person name="Nusskern D.R."/>
            <person name="Shue B.C."/>
            <person name="Zheng X.H."/>
            <person name="Zhong F."/>
            <person name="Delcher A.L."/>
            <person name="Huson D.H."/>
            <person name="Kravitz S.A."/>
            <person name="Mouchard L."/>
            <person name="Reinert K."/>
            <person name="Remington K.A."/>
            <person name="Clark A.G."/>
            <person name="Waterman M.S."/>
            <person name="Eichler E.E."/>
            <person name="Adams M.D."/>
            <person name="Hunkapiller M.W."/>
            <person name="Myers E.W."/>
            <person name="Venter J.C."/>
        </authorList>
    </citation>
    <scope>NUCLEOTIDE SEQUENCE [LARGE SCALE GENOMIC DNA]</scope>
</reference>
<reference key="6">
    <citation type="journal article" date="2004" name="Genome Res.">
        <title>The status, quality, and expansion of the NIH full-length cDNA project: the Mammalian Gene Collection (MGC).</title>
        <authorList>
            <consortium name="The MGC Project Team"/>
        </authorList>
    </citation>
    <scope>NUCLEOTIDE SEQUENCE [LARGE SCALE MRNA] (ISOFORM 1)</scope>
    <source>
        <tissue>Lung</tissue>
    </source>
</reference>
<reference key="7">
    <citation type="journal article" date="1989" name="Genome">
        <title>Organization of human class I homeobox genes.</title>
        <authorList>
            <person name="Boncinelli E."/>
            <person name="Acampora D."/>
            <person name="Pannese M."/>
            <person name="D'Esposito M."/>
            <person name="Somma R."/>
            <person name="Gaudino G."/>
            <person name="Stornaiuolo A."/>
            <person name="Cafiero M."/>
            <person name="Faiella A."/>
            <person name="Simeone A."/>
        </authorList>
    </citation>
    <scope>NUCLEOTIDE SEQUENCE [GENOMIC DNA] OF 141-206</scope>
</reference>
<accession>P09630</accession>
<accession>B2RBV2</accession>
<accession>Q6DK09</accession>
<feature type="chain" id="PRO_0000200174" description="Homeobox protein Hox-C6">
    <location>
        <begin position="1"/>
        <end position="235"/>
    </location>
</feature>
<feature type="DNA-binding region" description="Homeobox" evidence="1">
    <location>
        <begin position="141"/>
        <end position="200"/>
    </location>
</feature>
<feature type="region of interest" description="Disordered" evidence="2">
    <location>
        <begin position="200"/>
        <end position="235"/>
    </location>
</feature>
<feature type="short sequence motif" description="Antp-type hexapeptide">
    <location>
        <begin position="122"/>
        <end position="127"/>
    </location>
</feature>
<feature type="compositionally biased region" description="Basic and acidic residues" evidence="2">
    <location>
        <begin position="219"/>
        <end position="235"/>
    </location>
</feature>
<feature type="splice variant" id="VSP_002392" description="In isoform 2." evidence="3 4">
    <location>
        <begin position="1"/>
        <end position="82"/>
    </location>
</feature>
<feature type="sequence conflict" description="In Ref. 1 and 2." evidence="5" ref="1 2">
    <original>L</original>
    <variation>M</variation>
    <location>
        <position position="218"/>
    </location>
</feature>
<gene>
    <name type="primary">HOXC6</name>
    <name type="synonym">HOX3C</name>
</gene>
<evidence type="ECO:0000255" key="1">
    <source>
        <dbReference type="PROSITE-ProRule" id="PRU00108"/>
    </source>
</evidence>
<evidence type="ECO:0000256" key="2">
    <source>
        <dbReference type="SAM" id="MobiDB-lite"/>
    </source>
</evidence>
<evidence type="ECO:0000303" key="3">
    <source>
    </source>
</evidence>
<evidence type="ECO:0000303" key="4">
    <source>
    </source>
</evidence>
<evidence type="ECO:0000305" key="5"/>
<dbReference type="EMBL" id="S82986">
    <property type="protein sequence ID" value="AAB46892.1"/>
    <property type="molecule type" value="mRNA"/>
</dbReference>
<dbReference type="EMBL" id="M16938">
    <property type="protein sequence ID" value="AAA36007.1"/>
    <property type="molecule type" value="mRNA"/>
</dbReference>
<dbReference type="EMBL" id="AK314829">
    <property type="protein sequence ID" value="BAG37349.1"/>
    <property type="molecule type" value="mRNA"/>
</dbReference>
<dbReference type="EMBL" id="CH471054">
    <property type="protein sequence ID" value="EAW96746.1"/>
    <property type="molecule type" value="Genomic_DNA"/>
</dbReference>
<dbReference type="EMBL" id="BC074844">
    <property type="protein sequence ID" value="AAH74844.1"/>
    <property type="molecule type" value="mRNA"/>
</dbReference>
<dbReference type="EMBL" id="BC074845">
    <property type="protein sequence ID" value="AAH74845.1"/>
    <property type="molecule type" value="mRNA"/>
</dbReference>
<dbReference type="CCDS" id="CCDS41792.1">
    <molecule id="P09630-2"/>
</dbReference>
<dbReference type="CCDS" id="CCDS8871.1">
    <molecule id="P09630-1"/>
</dbReference>
<dbReference type="PIR" id="B28030">
    <property type="entry name" value="WJHU3C"/>
</dbReference>
<dbReference type="RefSeq" id="NP_004494.1">
    <molecule id="P09630-1"/>
    <property type="nucleotide sequence ID" value="NM_004503.4"/>
</dbReference>
<dbReference type="RefSeq" id="NP_710160.1">
    <molecule id="P09630-2"/>
    <property type="nucleotide sequence ID" value="NM_153693.5"/>
</dbReference>
<dbReference type="SMR" id="P09630"/>
<dbReference type="BioGRID" id="109463">
    <property type="interactions" value="16"/>
</dbReference>
<dbReference type="FunCoup" id="P09630">
    <property type="interactions" value="2429"/>
</dbReference>
<dbReference type="IntAct" id="P09630">
    <property type="interactions" value="10"/>
</dbReference>
<dbReference type="MINT" id="P09630"/>
<dbReference type="STRING" id="9606.ENSP00000243108"/>
<dbReference type="GlyGen" id="P09630">
    <property type="glycosylation" value="1 site, 1 O-linked glycan (1 site)"/>
</dbReference>
<dbReference type="iPTMnet" id="P09630"/>
<dbReference type="PhosphoSitePlus" id="P09630"/>
<dbReference type="BioMuta" id="HOXC6"/>
<dbReference type="DMDM" id="115502398"/>
<dbReference type="jPOST" id="P09630"/>
<dbReference type="MassIVE" id="P09630"/>
<dbReference type="PaxDb" id="9606-ENSP00000243108"/>
<dbReference type="PeptideAtlas" id="P09630"/>
<dbReference type="ProteomicsDB" id="52256">
    <molecule id="P09630-1"/>
</dbReference>
<dbReference type="ProteomicsDB" id="52257">
    <molecule id="P09630-2"/>
</dbReference>
<dbReference type="Pumba" id="P09630"/>
<dbReference type="Antibodypedia" id="15318">
    <property type="antibodies" value="251 antibodies from 30 providers"/>
</dbReference>
<dbReference type="DNASU" id="3223"/>
<dbReference type="Ensembl" id="ENST00000243108.5">
    <molecule id="P09630-1"/>
    <property type="protein sequence ID" value="ENSP00000243108.4"/>
    <property type="gene ID" value="ENSG00000197757.8"/>
</dbReference>
<dbReference type="Ensembl" id="ENST00000394331.3">
    <molecule id="P09630-2"/>
    <property type="protein sequence ID" value="ENSP00000377864.3"/>
    <property type="gene ID" value="ENSG00000197757.8"/>
</dbReference>
<dbReference type="GeneID" id="3223"/>
<dbReference type="KEGG" id="hsa:3223"/>
<dbReference type="MANE-Select" id="ENST00000243108.5">
    <property type="protein sequence ID" value="ENSP00000243108.4"/>
    <property type="RefSeq nucleotide sequence ID" value="NM_004503.4"/>
    <property type="RefSeq protein sequence ID" value="NP_004494.1"/>
</dbReference>
<dbReference type="UCSC" id="uc001ses.5">
    <molecule id="P09630-1"/>
    <property type="organism name" value="human"/>
</dbReference>
<dbReference type="AGR" id="HGNC:5128"/>
<dbReference type="CTD" id="3223"/>
<dbReference type="DisGeNET" id="3223"/>
<dbReference type="GeneCards" id="HOXC6"/>
<dbReference type="HGNC" id="HGNC:5128">
    <property type="gene designation" value="HOXC6"/>
</dbReference>
<dbReference type="HPA" id="ENSG00000197757">
    <property type="expression patterns" value="Tissue enhanced (fallopian tube, ovary)"/>
</dbReference>
<dbReference type="MIM" id="142972">
    <property type="type" value="gene"/>
</dbReference>
<dbReference type="neXtProt" id="NX_P09630"/>
<dbReference type="OpenTargets" id="ENSG00000197757"/>
<dbReference type="PharmGKB" id="PA29403"/>
<dbReference type="VEuPathDB" id="HostDB:ENSG00000197757"/>
<dbReference type="eggNOG" id="KOG0489">
    <property type="taxonomic scope" value="Eukaryota"/>
</dbReference>
<dbReference type="GeneTree" id="ENSGT00940000159254"/>
<dbReference type="HOGENOM" id="CLU_061398_4_0_1"/>
<dbReference type="InParanoid" id="P09630"/>
<dbReference type="OMA" id="CHLTGGQ"/>
<dbReference type="OrthoDB" id="6159439at2759"/>
<dbReference type="PAN-GO" id="P09630">
    <property type="GO annotations" value="5 GO annotations based on evolutionary models"/>
</dbReference>
<dbReference type="PhylomeDB" id="P09630"/>
<dbReference type="TreeFam" id="TF316310"/>
<dbReference type="PathwayCommons" id="P09630"/>
<dbReference type="SignaLink" id="P09630"/>
<dbReference type="SIGNOR" id="P09630"/>
<dbReference type="BioGRID-ORCS" id="3223">
    <property type="hits" value="18 hits in 1163 CRISPR screens"/>
</dbReference>
<dbReference type="GeneWiki" id="HOXC6"/>
<dbReference type="GenomeRNAi" id="3223"/>
<dbReference type="Pharos" id="P09630">
    <property type="development level" value="Tbio"/>
</dbReference>
<dbReference type="PRO" id="PR:P09630"/>
<dbReference type="Proteomes" id="UP000005640">
    <property type="component" value="Chromosome 12"/>
</dbReference>
<dbReference type="RNAct" id="P09630">
    <property type="molecule type" value="protein"/>
</dbReference>
<dbReference type="Bgee" id="ENSG00000197757">
    <property type="expression patterns" value="Expressed in renal medulla and 151 other cell types or tissues"/>
</dbReference>
<dbReference type="ExpressionAtlas" id="P09630">
    <property type="expression patterns" value="baseline and differential"/>
</dbReference>
<dbReference type="GO" id="GO:0000785">
    <property type="term" value="C:chromatin"/>
    <property type="evidence" value="ECO:0000247"/>
    <property type="project" value="NTNU_SB"/>
</dbReference>
<dbReference type="GO" id="GO:0005829">
    <property type="term" value="C:cytosol"/>
    <property type="evidence" value="ECO:0000314"/>
    <property type="project" value="HPA"/>
</dbReference>
<dbReference type="GO" id="GO:0005654">
    <property type="term" value="C:nucleoplasm"/>
    <property type="evidence" value="ECO:0000314"/>
    <property type="project" value="HPA"/>
</dbReference>
<dbReference type="GO" id="GO:0005634">
    <property type="term" value="C:nucleus"/>
    <property type="evidence" value="ECO:0000318"/>
    <property type="project" value="GO_Central"/>
</dbReference>
<dbReference type="GO" id="GO:0000981">
    <property type="term" value="F:DNA-binding transcription factor activity, RNA polymerase II-specific"/>
    <property type="evidence" value="ECO:0000247"/>
    <property type="project" value="NTNU_SB"/>
</dbReference>
<dbReference type="GO" id="GO:0000978">
    <property type="term" value="F:RNA polymerase II cis-regulatory region sequence-specific DNA binding"/>
    <property type="evidence" value="ECO:0000318"/>
    <property type="project" value="GO_Central"/>
</dbReference>
<dbReference type="GO" id="GO:0009952">
    <property type="term" value="P:anterior/posterior pattern specification"/>
    <property type="evidence" value="ECO:0000318"/>
    <property type="project" value="GO_Central"/>
</dbReference>
<dbReference type="GO" id="GO:0048706">
    <property type="term" value="P:embryonic skeletal system development"/>
    <property type="evidence" value="ECO:0007669"/>
    <property type="project" value="Ensembl"/>
</dbReference>
<dbReference type="GO" id="GO:0006357">
    <property type="term" value="P:regulation of transcription by RNA polymerase II"/>
    <property type="evidence" value="ECO:0000318"/>
    <property type="project" value="GO_Central"/>
</dbReference>
<dbReference type="CDD" id="cd00086">
    <property type="entry name" value="homeodomain"/>
    <property type="match status" value="1"/>
</dbReference>
<dbReference type="FunFam" id="1.10.10.60:FF:000879">
    <property type="match status" value="1"/>
</dbReference>
<dbReference type="Gene3D" id="1.10.10.60">
    <property type="entry name" value="Homeodomain-like"/>
    <property type="match status" value="1"/>
</dbReference>
<dbReference type="InterPro" id="IPR050296">
    <property type="entry name" value="Antp_homeobox"/>
</dbReference>
<dbReference type="InterPro" id="IPR001356">
    <property type="entry name" value="HD"/>
</dbReference>
<dbReference type="InterPro" id="IPR020479">
    <property type="entry name" value="HD_metazoa"/>
</dbReference>
<dbReference type="InterPro" id="IPR001827">
    <property type="entry name" value="Homeobox_Antennapedia_CS"/>
</dbReference>
<dbReference type="InterPro" id="IPR017970">
    <property type="entry name" value="Homeobox_CS"/>
</dbReference>
<dbReference type="InterPro" id="IPR009057">
    <property type="entry name" value="Homeodomain-like_sf"/>
</dbReference>
<dbReference type="PANTHER" id="PTHR45659">
    <property type="entry name" value="HOMEOBOX PROTEIN HOX"/>
    <property type="match status" value="1"/>
</dbReference>
<dbReference type="PANTHER" id="PTHR45659:SF1">
    <property type="entry name" value="HOMEOBOX PROTEIN HOX-C6"/>
    <property type="match status" value="1"/>
</dbReference>
<dbReference type="Pfam" id="PF00046">
    <property type="entry name" value="Homeodomain"/>
    <property type="match status" value="1"/>
</dbReference>
<dbReference type="PRINTS" id="PR00024">
    <property type="entry name" value="HOMEOBOX"/>
</dbReference>
<dbReference type="SMART" id="SM00389">
    <property type="entry name" value="HOX"/>
    <property type="match status" value="1"/>
</dbReference>
<dbReference type="SUPFAM" id="SSF46689">
    <property type="entry name" value="Homeodomain-like"/>
    <property type="match status" value="1"/>
</dbReference>
<dbReference type="PROSITE" id="PS00032">
    <property type="entry name" value="ANTENNAPEDIA"/>
    <property type="match status" value="1"/>
</dbReference>
<dbReference type="PROSITE" id="PS00027">
    <property type="entry name" value="HOMEOBOX_1"/>
    <property type="match status" value="1"/>
</dbReference>
<dbReference type="PROSITE" id="PS50071">
    <property type="entry name" value="HOMEOBOX_2"/>
    <property type="match status" value="1"/>
</dbReference>
<organism>
    <name type="scientific">Homo sapiens</name>
    <name type="common">Human</name>
    <dbReference type="NCBI Taxonomy" id="9606"/>
    <lineage>
        <taxon>Eukaryota</taxon>
        <taxon>Metazoa</taxon>
        <taxon>Chordata</taxon>
        <taxon>Craniata</taxon>
        <taxon>Vertebrata</taxon>
        <taxon>Euteleostomi</taxon>
        <taxon>Mammalia</taxon>
        <taxon>Eutheria</taxon>
        <taxon>Euarchontoglires</taxon>
        <taxon>Primates</taxon>
        <taxon>Haplorrhini</taxon>
        <taxon>Catarrhini</taxon>
        <taxon>Hominidae</taxon>
        <taxon>Homo</taxon>
    </lineage>
</organism>
<keyword id="KW-0025">Alternative splicing</keyword>
<keyword id="KW-0217">Developmental protein</keyword>
<keyword id="KW-0238">DNA-binding</keyword>
<keyword id="KW-0371">Homeobox</keyword>
<keyword id="KW-0539">Nucleus</keyword>
<keyword id="KW-1267">Proteomics identification</keyword>
<keyword id="KW-1185">Reference proteome</keyword>
<keyword id="KW-0804">Transcription</keyword>
<keyword id="KW-0805">Transcription regulation</keyword>
<protein>
    <recommendedName>
        <fullName>Homeobox protein Hox-C6</fullName>
    </recommendedName>
    <alternativeName>
        <fullName>Homeobox protein CP25</fullName>
    </alternativeName>
    <alternativeName>
        <fullName>Homeobox protein HHO.C8</fullName>
    </alternativeName>
    <alternativeName>
        <fullName>Homeobox protein Hox-3C</fullName>
    </alternativeName>
</protein>